<reference key="1">
    <citation type="submission" date="2008-03" db="EMBL/GenBank/DDBJ databases">
        <title>Complete sequence of chromosome of Methylobacterium radiotolerans JCM 2831.</title>
        <authorList>
            <consortium name="US DOE Joint Genome Institute"/>
            <person name="Copeland A."/>
            <person name="Lucas S."/>
            <person name="Lapidus A."/>
            <person name="Glavina del Rio T."/>
            <person name="Dalin E."/>
            <person name="Tice H."/>
            <person name="Bruce D."/>
            <person name="Goodwin L."/>
            <person name="Pitluck S."/>
            <person name="Kiss H."/>
            <person name="Brettin T."/>
            <person name="Detter J.C."/>
            <person name="Han C."/>
            <person name="Kuske C.R."/>
            <person name="Schmutz J."/>
            <person name="Larimer F."/>
            <person name="Land M."/>
            <person name="Hauser L."/>
            <person name="Kyrpides N."/>
            <person name="Mikhailova N."/>
            <person name="Marx C.J."/>
            <person name="Richardson P."/>
        </authorList>
    </citation>
    <scope>NUCLEOTIDE SEQUENCE [LARGE SCALE GENOMIC DNA]</scope>
    <source>
        <strain>ATCC 27329 / DSM 1819 / JCM 2831 / NBRC 15690 / NCIMB 10815 / 0-1</strain>
    </source>
</reference>
<accession>B1LWQ2</accession>
<evidence type="ECO:0000255" key="1">
    <source>
        <dbReference type="HAMAP-Rule" id="MF_01315"/>
    </source>
</evidence>
<evidence type="ECO:0000256" key="2">
    <source>
        <dbReference type="SAM" id="MobiDB-lite"/>
    </source>
</evidence>
<evidence type="ECO:0000305" key="3"/>
<gene>
    <name evidence="1" type="primary">rpsM</name>
    <name type="ordered locus">Mrad2831_2194</name>
</gene>
<comment type="function">
    <text evidence="1">Located at the top of the head of the 30S subunit, it contacts several helices of the 16S rRNA. In the 70S ribosome it contacts the 23S rRNA (bridge B1a) and protein L5 of the 50S subunit (bridge B1b), connecting the 2 subunits; these bridges are implicated in subunit movement. Contacts the tRNAs in the A and P-sites.</text>
</comment>
<comment type="subunit">
    <text evidence="1">Part of the 30S ribosomal subunit. Forms a loose heterodimer with protein S19. Forms two bridges to the 50S subunit in the 70S ribosome.</text>
</comment>
<comment type="similarity">
    <text evidence="1">Belongs to the universal ribosomal protein uS13 family.</text>
</comment>
<proteinExistence type="inferred from homology"/>
<feature type="chain" id="PRO_1000141287" description="Small ribosomal subunit protein uS13">
    <location>
        <begin position="1"/>
        <end position="122"/>
    </location>
</feature>
<feature type="region of interest" description="Disordered" evidence="2">
    <location>
        <begin position="92"/>
        <end position="122"/>
    </location>
</feature>
<dbReference type="EMBL" id="CP001001">
    <property type="protein sequence ID" value="ACB24189.1"/>
    <property type="molecule type" value="Genomic_DNA"/>
</dbReference>
<dbReference type="RefSeq" id="WP_012319166.1">
    <property type="nucleotide sequence ID" value="NC_010505.1"/>
</dbReference>
<dbReference type="SMR" id="B1LWQ2"/>
<dbReference type="STRING" id="426355.Mrad2831_2194"/>
<dbReference type="GeneID" id="6138226"/>
<dbReference type="KEGG" id="mrd:Mrad2831_2194"/>
<dbReference type="eggNOG" id="COG0099">
    <property type="taxonomic scope" value="Bacteria"/>
</dbReference>
<dbReference type="HOGENOM" id="CLU_103849_1_2_5"/>
<dbReference type="OrthoDB" id="9803610at2"/>
<dbReference type="Proteomes" id="UP000006589">
    <property type="component" value="Chromosome"/>
</dbReference>
<dbReference type="GO" id="GO:0005829">
    <property type="term" value="C:cytosol"/>
    <property type="evidence" value="ECO:0007669"/>
    <property type="project" value="TreeGrafter"/>
</dbReference>
<dbReference type="GO" id="GO:0015935">
    <property type="term" value="C:small ribosomal subunit"/>
    <property type="evidence" value="ECO:0007669"/>
    <property type="project" value="TreeGrafter"/>
</dbReference>
<dbReference type="GO" id="GO:0019843">
    <property type="term" value="F:rRNA binding"/>
    <property type="evidence" value="ECO:0007669"/>
    <property type="project" value="UniProtKB-UniRule"/>
</dbReference>
<dbReference type="GO" id="GO:0003735">
    <property type="term" value="F:structural constituent of ribosome"/>
    <property type="evidence" value="ECO:0007669"/>
    <property type="project" value="InterPro"/>
</dbReference>
<dbReference type="GO" id="GO:0000049">
    <property type="term" value="F:tRNA binding"/>
    <property type="evidence" value="ECO:0007669"/>
    <property type="project" value="UniProtKB-UniRule"/>
</dbReference>
<dbReference type="GO" id="GO:0006412">
    <property type="term" value="P:translation"/>
    <property type="evidence" value="ECO:0007669"/>
    <property type="project" value="UniProtKB-UniRule"/>
</dbReference>
<dbReference type="FunFam" id="1.10.8.50:FF:000001">
    <property type="entry name" value="30S ribosomal protein S13"/>
    <property type="match status" value="1"/>
</dbReference>
<dbReference type="FunFam" id="4.10.910.10:FF:000001">
    <property type="entry name" value="30S ribosomal protein S13"/>
    <property type="match status" value="1"/>
</dbReference>
<dbReference type="Gene3D" id="1.10.8.50">
    <property type="match status" value="1"/>
</dbReference>
<dbReference type="Gene3D" id="4.10.910.10">
    <property type="entry name" value="30s ribosomal protein s13, domain 2"/>
    <property type="match status" value="1"/>
</dbReference>
<dbReference type="HAMAP" id="MF_01315">
    <property type="entry name" value="Ribosomal_uS13"/>
    <property type="match status" value="1"/>
</dbReference>
<dbReference type="InterPro" id="IPR027437">
    <property type="entry name" value="Rbsml_uS13_C"/>
</dbReference>
<dbReference type="InterPro" id="IPR001892">
    <property type="entry name" value="Ribosomal_uS13"/>
</dbReference>
<dbReference type="InterPro" id="IPR010979">
    <property type="entry name" value="Ribosomal_uS13-like_H2TH"/>
</dbReference>
<dbReference type="InterPro" id="IPR019980">
    <property type="entry name" value="Ribosomal_uS13_bac-type"/>
</dbReference>
<dbReference type="NCBIfam" id="TIGR03631">
    <property type="entry name" value="uS13_bact"/>
    <property type="match status" value="1"/>
</dbReference>
<dbReference type="PANTHER" id="PTHR10871">
    <property type="entry name" value="30S RIBOSOMAL PROTEIN S13/40S RIBOSOMAL PROTEIN S18"/>
    <property type="match status" value="1"/>
</dbReference>
<dbReference type="PANTHER" id="PTHR10871:SF1">
    <property type="entry name" value="SMALL RIBOSOMAL SUBUNIT PROTEIN US13M"/>
    <property type="match status" value="1"/>
</dbReference>
<dbReference type="Pfam" id="PF00416">
    <property type="entry name" value="Ribosomal_S13"/>
    <property type="match status" value="1"/>
</dbReference>
<dbReference type="PIRSF" id="PIRSF002134">
    <property type="entry name" value="Ribosomal_S13"/>
    <property type="match status" value="1"/>
</dbReference>
<dbReference type="SUPFAM" id="SSF46946">
    <property type="entry name" value="S13-like H2TH domain"/>
    <property type="match status" value="1"/>
</dbReference>
<dbReference type="PROSITE" id="PS50159">
    <property type="entry name" value="RIBOSOMAL_S13_2"/>
    <property type="match status" value="1"/>
</dbReference>
<protein>
    <recommendedName>
        <fullName evidence="1">Small ribosomal subunit protein uS13</fullName>
    </recommendedName>
    <alternativeName>
        <fullName evidence="3">30S ribosomal protein S13</fullName>
    </alternativeName>
</protein>
<name>RS13_METRJ</name>
<sequence length="122" mass="13916">MARIAGVNIPTNKRVVIALQYIHGIGAKKAEEITQKVNIPAERRVNQLTDAEVLQIRETIDRDYLVEGDLRREVSMNIKRLMDLGAYRGLRHRKQLPVRGQRTHTNARTRKGKAKPIAGKKK</sequence>
<organism>
    <name type="scientific">Methylobacterium radiotolerans (strain ATCC 27329 / DSM 1819 / JCM 2831 / NBRC 15690 / NCIMB 10815 / 0-1)</name>
    <dbReference type="NCBI Taxonomy" id="426355"/>
    <lineage>
        <taxon>Bacteria</taxon>
        <taxon>Pseudomonadati</taxon>
        <taxon>Pseudomonadota</taxon>
        <taxon>Alphaproteobacteria</taxon>
        <taxon>Hyphomicrobiales</taxon>
        <taxon>Methylobacteriaceae</taxon>
        <taxon>Methylobacterium</taxon>
    </lineage>
</organism>
<keyword id="KW-0687">Ribonucleoprotein</keyword>
<keyword id="KW-0689">Ribosomal protein</keyword>
<keyword id="KW-0694">RNA-binding</keyword>
<keyword id="KW-0699">rRNA-binding</keyword>
<keyword id="KW-0820">tRNA-binding</keyword>